<organism>
    <name type="scientific">Prochlorococcus marinus (strain MIT 9312)</name>
    <dbReference type="NCBI Taxonomy" id="74546"/>
    <lineage>
        <taxon>Bacteria</taxon>
        <taxon>Bacillati</taxon>
        <taxon>Cyanobacteriota</taxon>
        <taxon>Cyanophyceae</taxon>
        <taxon>Synechococcales</taxon>
        <taxon>Prochlorococcaceae</taxon>
        <taxon>Prochlorococcus</taxon>
    </lineage>
</organism>
<protein>
    <recommendedName>
        <fullName evidence="1">tRNA N6-adenosine threonylcarbamoyltransferase</fullName>
        <ecNumber evidence="1">2.3.1.234</ecNumber>
    </recommendedName>
    <alternativeName>
        <fullName evidence="1">N6-L-threonylcarbamoyladenine synthase</fullName>
        <shortName evidence="1">t(6)A synthase</shortName>
    </alternativeName>
    <alternativeName>
        <fullName evidence="1">t(6)A37 threonylcarbamoyladenosine biosynthesis protein TsaD</fullName>
    </alternativeName>
    <alternativeName>
        <fullName evidence="1">tRNA threonylcarbamoyladenosine biosynthesis protein TsaD</fullName>
    </alternativeName>
</protein>
<dbReference type="EC" id="2.3.1.234" evidence="1"/>
<dbReference type="EMBL" id="CP000111">
    <property type="protein sequence ID" value="ABB49531.1"/>
    <property type="molecule type" value="Genomic_DNA"/>
</dbReference>
<dbReference type="RefSeq" id="WP_011376030.1">
    <property type="nucleotide sequence ID" value="NC_007577.1"/>
</dbReference>
<dbReference type="SMR" id="Q31C64"/>
<dbReference type="STRING" id="74546.PMT9312_0470"/>
<dbReference type="KEGG" id="pmi:PMT9312_0470"/>
<dbReference type="eggNOG" id="COG0533">
    <property type="taxonomic scope" value="Bacteria"/>
</dbReference>
<dbReference type="HOGENOM" id="CLU_023208_0_2_3"/>
<dbReference type="OrthoDB" id="9806197at2"/>
<dbReference type="Proteomes" id="UP000002715">
    <property type="component" value="Chromosome"/>
</dbReference>
<dbReference type="GO" id="GO:0005737">
    <property type="term" value="C:cytoplasm"/>
    <property type="evidence" value="ECO:0007669"/>
    <property type="project" value="UniProtKB-SubCell"/>
</dbReference>
<dbReference type="GO" id="GO:0005506">
    <property type="term" value="F:iron ion binding"/>
    <property type="evidence" value="ECO:0007669"/>
    <property type="project" value="UniProtKB-UniRule"/>
</dbReference>
<dbReference type="GO" id="GO:0061711">
    <property type="term" value="F:N(6)-L-threonylcarbamoyladenine synthase activity"/>
    <property type="evidence" value="ECO:0007669"/>
    <property type="project" value="UniProtKB-EC"/>
</dbReference>
<dbReference type="GO" id="GO:0002949">
    <property type="term" value="P:tRNA threonylcarbamoyladenosine modification"/>
    <property type="evidence" value="ECO:0007669"/>
    <property type="project" value="UniProtKB-UniRule"/>
</dbReference>
<dbReference type="FunFam" id="3.30.420.40:FF:000012">
    <property type="entry name" value="tRNA N6-adenosine threonylcarbamoyltransferase"/>
    <property type="match status" value="1"/>
</dbReference>
<dbReference type="FunFam" id="3.30.420.40:FF:000040">
    <property type="entry name" value="tRNA N6-adenosine threonylcarbamoyltransferase"/>
    <property type="match status" value="1"/>
</dbReference>
<dbReference type="Gene3D" id="3.30.420.40">
    <property type="match status" value="2"/>
</dbReference>
<dbReference type="HAMAP" id="MF_01445">
    <property type="entry name" value="TsaD"/>
    <property type="match status" value="1"/>
</dbReference>
<dbReference type="InterPro" id="IPR043129">
    <property type="entry name" value="ATPase_NBD"/>
</dbReference>
<dbReference type="InterPro" id="IPR000905">
    <property type="entry name" value="Gcp-like_dom"/>
</dbReference>
<dbReference type="InterPro" id="IPR017861">
    <property type="entry name" value="KAE1/TsaD"/>
</dbReference>
<dbReference type="InterPro" id="IPR022450">
    <property type="entry name" value="TsaD"/>
</dbReference>
<dbReference type="NCBIfam" id="TIGR00329">
    <property type="entry name" value="gcp_kae1"/>
    <property type="match status" value="1"/>
</dbReference>
<dbReference type="NCBIfam" id="TIGR03723">
    <property type="entry name" value="T6A_TsaD_YgjD"/>
    <property type="match status" value="1"/>
</dbReference>
<dbReference type="PANTHER" id="PTHR11735">
    <property type="entry name" value="TRNA N6-ADENOSINE THREONYLCARBAMOYLTRANSFERASE"/>
    <property type="match status" value="1"/>
</dbReference>
<dbReference type="PANTHER" id="PTHR11735:SF6">
    <property type="entry name" value="TRNA N6-ADENOSINE THREONYLCARBAMOYLTRANSFERASE, MITOCHONDRIAL"/>
    <property type="match status" value="1"/>
</dbReference>
<dbReference type="Pfam" id="PF00814">
    <property type="entry name" value="TsaD"/>
    <property type="match status" value="1"/>
</dbReference>
<dbReference type="PRINTS" id="PR00789">
    <property type="entry name" value="OSIALOPTASE"/>
</dbReference>
<dbReference type="SUPFAM" id="SSF53067">
    <property type="entry name" value="Actin-like ATPase domain"/>
    <property type="match status" value="2"/>
</dbReference>
<comment type="function">
    <text evidence="1">Required for the formation of a threonylcarbamoyl group on adenosine at position 37 (t(6)A37) in tRNAs that read codons beginning with adenine. Is involved in the transfer of the threonylcarbamoyl moiety of threonylcarbamoyl-AMP (TC-AMP) to the N6 group of A37, together with TsaE and TsaB. TsaD likely plays a direct catalytic role in this reaction.</text>
</comment>
<comment type="catalytic activity">
    <reaction evidence="1">
        <text>L-threonylcarbamoyladenylate + adenosine(37) in tRNA = N(6)-L-threonylcarbamoyladenosine(37) in tRNA + AMP + H(+)</text>
        <dbReference type="Rhea" id="RHEA:37059"/>
        <dbReference type="Rhea" id="RHEA-COMP:10162"/>
        <dbReference type="Rhea" id="RHEA-COMP:10163"/>
        <dbReference type="ChEBI" id="CHEBI:15378"/>
        <dbReference type="ChEBI" id="CHEBI:73682"/>
        <dbReference type="ChEBI" id="CHEBI:74411"/>
        <dbReference type="ChEBI" id="CHEBI:74418"/>
        <dbReference type="ChEBI" id="CHEBI:456215"/>
        <dbReference type="EC" id="2.3.1.234"/>
    </reaction>
</comment>
<comment type="cofactor">
    <cofactor evidence="1">
        <name>Fe(2+)</name>
        <dbReference type="ChEBI" id="CHEBI:29033"/>
    </cofactor>
    <text evidence="1">Binds 1 Fe(2+) ion per subunit.</text>
</comment>
<comment type="subcellular location">
    <subcellularLocation>
        <location evidence="1">Cytoplasm</location>
    </subcellularLocation>
</comment>
<comment type="similarity">
    <text evidence="1">Belongs to the KAE1 / TsaD family.</text>
</comment>
<accession>Q31C64</accession>
<proteinExistence type="inferred from homology"/>
<evidence type="ECO:0000255" key="1">
    <source>
        <dbReference type="HAMAP-Rule" id="MF_01445"/>
    </source>
</evidence>
<feature type="chain" id="PRO_0000303481" description="tRNA N6-adenosine threonylcarbamoyltransferase">
    <location>
        <begin position="1"/>
        <end position="356"/>
    </location>
</feature>
<feature type="binding site" evidence="1">
    <location>
        <position position="115"/>
    </location>
    <ligand>
        <name>Fe cation</name>
        <dbReference type="ChEBI" id="CHEBI:24875"/>
    </ligand>
</feature>
<feature type="binding site" evidence="1">
    <location>
        <position position="119"/>
    </location>
    <ligand>
        <name>Fe cation</name>
        <dbReference type="ChEBI" id="CHEBI:24875"/>
    </ligand>
</feature>
<feature type="binding site" evidence="1">
    <location>
        <begin position="138"/>
        <end position="142"/>
    </location>
    <ligand>
        <name>substrate</name>
    </ligand>
</feature>
<feature type="binding site" evidence="1">
    <location>
        <position position="171"/>
    </location>
    <ligand>
        <name>substrate</name>
    </ligand>
</feature>
<feature type="binding site" evidence="1">
    <location>
        <position position="184"/>
    </location>
    <ligand>
        <name>substrate</name>
    </ligand>
</feature>
<feature type="binding site" evidence="1">
    <location>
        <position position="283"/>
    </location>
    <ligand>
        <name>substrate</name>
    </ligand>
</feature>
<feature type="binding site" evidence="1">
    <location>
        <position position="311"/>
    </location>
    <ligand>
        <name>Fe cation</name>
        <dbReference type="ChEBI" id="CHEBI:24875"/>
    </ligand>
</feature>
<name>TSAD_PROM9</name>
<keyword id="KW-0012">Acyltransferase</keyword>
<keyword id="KW-0963">Cytoplasm</keyword>
<keyword id="KW-0408">Iron</keyword>
<keyword id="KW-0479">Metal-binding</keyword>
<keyword id="KW-0808">Transferase</keyword>
<keyword id="KW-0819">tRNA processing</keyword>
<sequence>MRKVLAIETSCDETSVSIVSNIGNTFKIHSNIIASQIEDHSKWGGVVPELAARKHLELLPFVLEKALTESKIKIEEVDYIASTVAPGLVGCLRVGSITARSLCMLHSKPFLGIHHLEGHLSSILFSENYPKKSFLTLLVSGGHTELIKVDDRRGMQRLGKSFDDAAGEAFDKVGRLLGLSYPGGPAIEKIAKNGDPMKFNLPKCRISDKKGGFLKYDFSFSGLKTAVLRLVEKINLDGKTVPVPDIAASFERVVAEVLVERTIRCAEDHSLDNVVVVGGVAANNTLRKMMISEANKKSIKVHLAPLNLCTDNAAMIGAAALFRIKFKDHLSSLKLGVSGRLSIEQANTLYEENPPF</sequence>
<reference key="1">
    <citation type="journal article" date="2006" name="Science">
        <title>Genomic islands and the ecology and evolution of Prochlorococcus.</title>
        <authorList>
            <person name="Coleman M.L."/>
            <person name="Sullivan M.B."/>
            <person name="Martiny A.C."/>
            <person name="Steglich C."/>
            <person name="Barry K."/>
            <person name="Delong E.F."/>
            <person name="Chisholm S.W."/>
        </authorList>
    </citation>
    <scope>NUCLEOTIDE SEQUENCE [LARGE SCALE GENOMIC DNA]</scope>
    <source>
        <strain>MIT 9312</strain>
    </source>
</reference>
<gene>
    <name evidence="1" type="primary">tsaD</name>
    <name type="synonym">gcp</name>
    <name type="ordered locus">PMT9312_0470</name>
</gene>